<keyword id="KW-0963">Cytoplasm</keyword>
<keyword id="KW-0251">Elongation factor</keyword>
<keyword id="KW-0648">Protein biosynthesis</keyword>
<keyword id="KW-1185">Reference proteome</keyword>
<protein>
    <recommendedName>
        <fullName>Elongation factor P 2</fullName>
        <shortName>EF-P 2</shortName>
    </recommendedName>
</protein>
<accession>O84757</accession>
<sequence length="190" mass="21521">MVRVSTSEFRVGLRVKIDGQPYVILQNDFVKPGKGQAFNRIKVKNFLTGRVIEKTFKSGESIETADVREQQMRLLYTDQEGATFMDDETFEQELIFWDKLENVRQWLLEDTIYTLVLYNGDVISVEPPIFMELTIAETAPGVRGDTASGRVLKPATTNTGAKIMVPIFIEEGEVVKVDTRTGSYESRVSK</sequence>
<gene>
    <name type="primary">efp2</name>
    <name type="ordered locus">CT_752</name>
</gene>
<dbReference type="EMBL" id="AE001273">
    <property type="protein sequence ID" value="AAC68347.1"/>
    <property type="molecule type" value="Genomic_DNA"/>
</dbReference>
<dbReference type="PIR" id="E71475">
    <property type="entry name" value="E71475"/>
</dbReference>
<dbReference type="SMR" id="O84757"/>
<dbReference type="FunCoup" id="O84757">
    <property type="interactions" value="266"/>
</dbReference>
<dbReference type="STRING" id="272561.CT_752"/>
<dbReference type="EnsemblBacteria" id="AAC68347">
    <property type="protein sequence ID" value="AAC68347"/>
    <property type="gene ID" value="CT_752"/>
</dbReference>
<dbReference type="KEGG" id="ctr:CT_752"/>
<dbReference type="PATRIC" id="fig|272561.5.peg.827"/>
<dbReference type="HOGENOM" id="CLU_074944_0_0_0"/>
<dbReference type="InParanoid" id="O84757"/>
<dbReference type="OrthoDB" id="9801844at2"/>
<dbReference type="UniPathway" id="UPA00345"/>
<dbReference type="Proteomes" id="UP000000431">
    <property type="component" value="Chromosome"/>
</dbReference>
<dbReference type="GO" id="GO:0005737">
    <property type="term" value="C:cytoplasm"/>
    <property type="evidence" value="ECO:0000318"/>
    <property type="project" value="GO_Central"/>
</dbReference>
<dbReference type="GO" id="GO:0003746">
    <property type="term" value="F:translation elongation factor activity"/>
    <property type="evidence" value="ECO:0000318"/>
    <property type="project" value="GO_Central"/>
</dbReference>
<dbReference type="GO" id="GO:0043043">
    <property type="term" value="P:peptide biosynthetic process"/>
    <property type="evidence" value="ECO:0007669"/>
    <property type="project" value="InterPro"/>
</dbReference>
<dbReference type="CDD" id="cd04470">
    <property type="entry name" value="S1_EF-P_repeat_1"/>
    <property type="match status" value="1"/>
</dbReference>
<dbReference type="CDD" id="cd05794">
    <property type="entry name" value="S1_EF-P_repeat_2"/>
    <property type="match status" value="1"/>
</dbReference>
<dbReference type="FunFam" id="2.30.30.30:FF:000003">
    <property type="entry name" value="Elongation factor P"/>
    <property type="match status" value="1"/>
</dbReference>
<dbReference type="FunFam" id="2.40.50.140:FF:000004">
    <property type="entry name" value="Elongation factor P"/>
    <property type="match status" value="1"/>
</dbReference>
<dbReference type="FunFam" id="2.40.50.140:FF:000009">
    <property type="entry name" value="Elongation factor P"/>
    <property type="match status" value="1"/>
</dbReference>
<dbReference type="Gene3D" id="2.30.30.30">
    <property type="match status" value="1"/>
</dbReference>
<dbReference type="Gene3D" id="2.40.50.140">
    <property type="entry name" value="Nucleic acid-binding proteins"/>
    <property type="match status" value="2"/>
</dbReference>
<dbReference type="HAMAP" id="MF_00141">
    <property type="entry name" value="EF_P"/>
    <property type="match status" value="1"/>
</dbReference>
<dbReference type="InterPro" id="IPR015365">
    <property type="entry name" value="Elong-fact-P_C"/>
</dbReference>
<dbReference type="InterPro" id="IPR012340">
    <property type="entry name" value="NA-bd_OB-fold"/>
</dbReference>
<dbReference type="InterPro" id="IPR014722">
    <property type="entry name" value="Rib_uL2_dom2"/>
</dbReference>
<dbReference type="InterPro" id="IPR020599">
    <property type="entry name" value="Transl_elong_fac_P/YeiP"/>
</dbReference>
<dbReference type="InterPro" id="IPR013185">
    <property type="entry name" value="Transl_elong_KOW-like"/>
</dbReference>
<dbReference type="InterPro" id="IPR001059">
    <property type="entry name" value="Transl_elong_P/YeiP_cen"/>
</dbReference>
<dbReference type="InterPro" id="IPR013852">
    <property type="entry name" value="Transl_elong_P/YeiP_CS"/>
</dbReference>
<dbReference type="InterPro" id="IPR011768">
    <property type="entry name" value="Transl_elongation_fac_P"/>
</dbReference>
<dbReference type="InterPro" id="IPR008991">
    <property type="entry name" value="Translation_prot_SH3-like_sf"/>
</dbReference>
<dbReference type="NCBIfam" id="TIGR00038">
    <property type="entry name" value="efp"/>
    <property type="match status" value="1"/>
</dbReference>
<dbReference type="NCBIfam" id="NF001810">
    <property type="entry name" value="PRK00529.1"/>
    <property type="match status" value="1"/>
</dbReference>
<dbReference type="PANTHER" id="PTHR30053">
    <property type="entry name" value="ELONGATION FACTOR P"/>
    <property type="match status" value="1"/>
</dbReference>
<dbReference type="PANTHER" id="PTHR30053:SF12">
    <property type="entry name" value="ELONGATION FACTOR P (EF-P) FAMILY PROTEIN"/>
    <property type="match status" value="1"/>
</dbReference>
<dbReference type="Pfam" id="PF01132">
    <property type="entry name" value="EFP"/>
    <property type="match status" value="1"/>
</dbReference>
<dbReference type="Pfam" id="PF08207">
    <property type="entry name" value="EFP_N"/>
    <property type="match status" value="1"/>
</dbReference>
<dbReference type="Pfam" id="PF09285">
    <property type="entry name" value="Elong-fact-P_C"/>
    <property type="match status" value="1"/>
</dbReference>
<dbReference type="PIRSF" id="PIRSF005901">
    <property type="entry name" value="EF-P"/>
    <property type="match status" value="1"/>
</dbReference>
<dbReference type="SMART" id="SM01185">
    <property type="entry name" value="EFP"/>
    <property type="match status" value="1"/>
</dbReference>
<dbReference type="SMART" id="SM00841">
    <property type="entry name" value="Elong-fact-P_C"/>
    <property type="match status" value="1"/>
</dbReference>
<dbReference type="SUPFAM" id="SSF50249">
    <property type="entry name" value="Nucleic acid-binding proteins"/>
    <property type="match status" value="2"/>
</dbReference>
<dbReference type="SUPFAM" id="SSF50104">
    <property type="entry name" value="Translation proteins SH3-like domain"/>
    <property type="match status" value="1"/>
</dbReference>
<dbReference type="PROSITE" id="PS01275">
    <property type="entry name" value="EFP"/>
    <property type="match status" value="1"/>
</dbReference>
<organism>
    <name type="scientific">Chlamydia trachomatis serovar D (strain ATCC VR-885 / DSM 19411 / UW-3/Cx)</name>
    <dbReference type="NCBI Taxonomy" id="272561"/>
    <lineage>
        <taxon>Bacteria</taxon>
        <taxon>Pseudomonadati</taxon>
        <taxon>Chlamydiota</taxon>
        <taxon>Chlamydiia</taxon>
        <taxon>Chlamydiales</taxon>
        <taxon>Chlamydiaceae</taxon>
        <taxon>Chlamydia/Chlamydophila group</taxon>
        <taxon>Chlamydia</taxon>
    </lineage>
</organism>
<proteinExistence type="inferred from homology"/>
<reference key="1">
    <citation type="journal article" date="1998" name="Science">
        <title>Genome sequence of an obligate intracellular pathogen of humans: Chlamydia trachomatis.</title>
        <authorList>
            <person name="Stephens R.S."/>
            <person name="Kalman S."/>
            <person name="Lammel C.J."/>
            <person name="Fan J."/>
            <person name="Marathe R."/>
            <person name="Aravind L."/>
            <person name="Mitchell W.P."/>
            <person name="Olinger L."/>
            <person name="Tatusov R.L."/>
            <person name="Zhao Q."/>
            <person name="Koonin E.V."/>
            <person name="Davis R.W."/>
        </authorList>
    </citation>
    <scope>NUCLEOTIDE SEQUENCE [LARGE SCALE GENOMIC DNA]</scope>
    <source>
        <strain>ATCC VR-885 / DSM 19411 / UW-3/Cx</strain>
    </source>
</reference>
<evidence type="ECO:0000250" key="1"/>
<evidence type="ECO:0000305" key="2"/>
<comment type="function">
    <text evidence="1">Involved in peptide bond synthesis. Stimulates efficient translation and peptide-bond synthesis on native or reconstituted 70S ribosomes in vitro. Probably functions indirectly by altering the affinity of the ribosome for aminoacyl-tRNA, thus increasing their reactivity as acceptors for peptidyl transferase (By similarity).</text>
</comment>
<comment type="pathway">
    <text>Protein biosynthesis; polypeptide chain elongation.</text>
</comment>
<comment type="subcellular location">
    <subcellularLocation>
        <location evidence="1">Cytoplasm</location>
    </subcellularLocation>
</comment>
<comment type="similarity">
    <text evidence="2">Belongs to the elongation factor P family.</text>
</comment>
<name>EFP2_CHLTR</name>
<feature type="chain" id="PRO_0000094233" description="Elongation factor P 2">
    <location>
        <begin position="1"/>
        <end position="190"/>
    </location>
</feature>